<proteinExistence type="evidence at transcript level"/>
<gene>
    <name evidence="5" type="primary">poxA</name>
</gene>
<name>POXA_PENOX</name>
<accession>A0A1W5T3J9</accession>
<dbReference type="EMBL" id="KY764290">
    <property type="protein sequence ID" value="ARF05975.1"/>
    <property type="molecule type" value="Genomic_DNA"/>
</dbReference>
<dbReference type="SMR" id="A0A1W5T3J9"/>
<dbReference type="GlyCosmos" id="A0A1W5T3J9">
    <property type="glycosylation" value="1 site, No reported glycans"/>
</dbReference>
<dbReference type="GO" id="GO:0005886">
    <property type="term" value="C:plasma membrane"/>
    <property type="evidence" value="ECO:0007669"/>
    <property type="project" value="UniProtKB-SubCell"/>
</dbReference>
<dbReference type="GO" id="GO:0022857">
    <property type="term" value="F:transmembrane transporter activity"/>
    <property type="evidence" value="ECO:0007669"/>
    <property type="project" value="InterPro"/>
</dbReference>
<dbReference type="Gene3D" id="1.20.1250.20">
    <property type="entry name" value="MFS general substrate transporter like domains"/>
    <property type="match status" value="1"/>
</dbReference>
<dbReference type="InterPro" id="IPR011701">
    <property type="entry name" value="MFS"/>
</dbReference>
<dbReference type="InterPro" id="IPR020846">
    <property type="entry name" value="MFS_dom"/>
</dbReference>
<dbReference type="InterPro" id="IPR036259">
    <property type="entry name" value="MFS_trans_sf"/>
</dbReference>
<dbReference type="PANTHER" id="PTHR23501">
    <property type="entry name" value="MAJOR FACILITATOR SUPERFAMILY"/>
    <property type="match status" value="1"/>
</dbReference>
<dbReference type="PANTHER" id="PTHR23501:SF193">
    <property type="entry name" value="MULTIDRUG TRANSPORTER, PUTATIVE (AFU_ORTHOLOGUE AFUA_8G00940)-RELATED"/>
    <property type="match status" value="1"/>
</dbReference>
<dbReference type="Pfam" id="PF07690">
    <property type="entry name" value="MFS_1"/>
    <property type="match status" value="1"/>
</dbReference>
<dbReference type="SUPFAM" id="SSF103473">
    <property type="entry name" value="MFS general substrate transporter"/>
    <property type="match status" value="1"/>
</dbReference>
<dbReference type="PROSITE" id="PS50850">
    <property type="entry name" value="MFS"/>
    <property type="match status" value="1"/>
</dbReference>
<reference key="1">
    <citation type="journal article" date="2017" name="J. Am. Chem. Soc.">
        <title>Collaborative Biosynthesis of Maleimide- and Succinimide-Containing Natural Products by Fungal Polyketide Megasynthases.</title>
        <authorList>
            <person name="Sato M."/>
            <person name="Dander J.E."/>
            <person name="Sato C."/>
            <person name="Hung Y.S."/>
            <person name="Gao S.S."/>
            <person name="Tang M.C."/>
            <person name="Hang L."/>
            <person name="Winter J.M."/>
            <person name="Garg N.K."/>
            <person name="Watanabe K."/>
            <person name="Tang Y."/>
        </authorList>
    </citation>
    <scope>NUCLEOTIDE SEQUENCE [GENOMIC DNA]</scope>
    <scope>FUNCTION</scope>
    <scope>INDUCTION</scope>
    <source>
        <strain>K85</strain>
    </source>
</reference>
<reference key="2">
    <citation type="journal article" date="2020" name="Chem. Commun. (Camb.)">
        <title>Evidence for enzyme catalysed intramolecular [4+2] Diels-Alder cyclization during the biosynthesis of pyrichalasin H.</title>
        <authorList>
            <person name="Hantke V."/>
            <person name="Skellam E.J."/>
            <person name="Cox R.J."/>
        </authorList>
    </citation>
    <scope>FUNCTION</scope>
</reference>
<comment type="function">
    <text evidence="4">MFS-type transporter; part of the gene cluster that mediates the biosynthesis of oxaleimides, cytotoxic compounds containing an unusual disubstituted succinimide moiety.</text>
</comment>
<comment type="subcellular location">
    <subcellularLocation>
        <location evidence="7">Cell membrane</location>
        <topology evidence="1">Multi-pass membrane protein</topology>
    </subcellularLocation>
</comment>
<comment type="induction">
    <text evidence="4">Expression is positively regulated by the oxaleimides biosynthesis cluster-specific transcription factor poxB.</text>
</comment>
<comment type="similarity">
    <text evidence="6">Belongs to the major facilitator superfamily. TCR/Tet family.</text>
</comment>
<sequence>MPASDRTSETGDVEKVTAAETPKEVPASNAAESTALTGLPLYTVLVGLGLALFLGAMDMAMLGTAVPSITSTFHTTADIGWYGAAYPLTMSSIQLLAGKIYAQFPQKLVFLVFFGLFMLGSLLCGVAVNSPMFIVGRATAGAGAAGVLSGTLAIVSAVVPLDKQSLILGLMMSLVGTAVVLGPVISGLLTDHSTWRWCFYLNLPCGGVTLLALILFFRPPKRPTRTTPLSIPELIKKLDLAGCLGFIPAVVMLLLALQWGGDGSKEHAWNSATIIGLFCGAGVSLILFLIWEHYQGDDAMLPLKFFRDLTIIASCLYGFALLGGYVVVGYFLPEWFQIIKGANPQSSAVMLLPNVITNFISKAVIGVIVNKTGYFNPWLFFGAAVLAIGSGLETNFHPSTPRPNWIGYQILQGAALGIIQAPTLGVQVALAKQKHLIPVALSLVIFFQYFGSSIMLSISLTIFQNLLRPGLVSKAGMTEAQVQQYVAAGNSEVRELTAQIDPSRLGVVLEVYNDAIAGVMWLSTAAALFGFLVSFGFPWKSLKAQTEENKKEAAEEEEEVKVAAVEA</sequence>
<keyword id="KW-1003">Cell membrane</keyword>
<keyword id="KW-0325">Glycoprotein</keyword>
<keyword id="KW-0472">Membrane</keyword>
<keyword id="KW-0812">Transmembrane</keyword>
<keyword id="KW-1133">Transmembrane helix</keyword>
<keyword id="KW-0813">Transport</keyword>
<protein>
    <recommendedName>
        <fullName evidence="5">MFS-type transporter poxA</fullName>
    </recommendedName>
    <alternativeName>
        <fullName evidence="5">Oxaleimides biosynthesis cluster protein A</fullName>
    </alternativeName>
</protein>
<feature type="chain" id="PRO_0000453767" description="MFS-type transporter poxA">
    <location>
        <begin position="1"/>
        <end position="567"/>
    </location>
</feature>
<feature type="transmembrane region" description="Helical" evidence="1">
    <location>
        <begin position="35"/>
        <end position="55"/>
    </location>
</feature>
<feature type="transmembrane region" description="Helical" evidence="1">
    <location>
        <begin position="77"/>
        <end position="97"/>
    </location>
</feature>
<feature type="transmembrane region" description="Helical" evidence="1">
    <location>
        <begin position="108"/>
        <end position="128"/>
    </location>
</feature>
<feature type="transmembrane region" description="Helical" evidence="1">
    <location>
        <begin position="141"/>
        <end position="161"/>
    </location>
</feature>
<feature type="transmembrane region" description="Helical" evidence="1">
    <location>
        <begin position="165"/>
        <end position="185"/>
    </location>
</feature>
<feature type="transmembrane region" description="Helical" evidence="1">
    <location>
        <begin position="197"/>
        <end position="217"/>
    </location>
</feature>
<feature type="transmembrane region" description="Helical" evidence="1">
    <location>
        <begin position="240"/>
        <end position="260"/>
    </location>
</feature>
<feature type="transmembrane region" description="Helical" evidence="1">
    <location>
        <begin position="271"/>
        <end position="291"/>
    </location>
</feature>
<feature type="transmembrane region" description="Helical" evidence="1">
    <location>
        <begin position="311"/>
        <end position="331"/>
    </location>
</feature>
<feature type="transmembrane region" description="Helical" evidence="1">
    <location>
        <begin position="349"/>
        <end position="369"/>
    </location>
</feature>
<feature type="transmembrane region" description="Helical" evidence="1">
    <location>
        <begin position="372"/>
        <end position="392"/>
    </location>
</feature>
<feature type="transmembrane region" description="Helical" evidence="1">
    <location>
        <begin position="410"/>
        <end position="430"/>
    </location>
</feature>
<feature type="transmembrane region" description="Helical" evidence="1">
    <location>
        <begin position="436"/>
        <end position="456"/>
    </location>
</feature>
<feature type="transmembrane region" description="Helical" evidence="1">
    <location>
        <begin position="515"/>
        <end position="535"/>
    </location>
</feature>
<feature type="region of interest" description="Disordered" evidence="3">
    <location>
        <begin position="1"/>
        <end position="24"/>
    </location>
</feature>
<feature type="region of interest" description="Disordered" evidence="3">
    <location>
        <begin position="547"/>
        <end position="567"/>
    </location>
</feature>
<feature type="compositionally biased region" description="Basic and acidic residues" evidence="3">
    <location>
        <begin position="1"/>
        <end position="23"/>
    </location>
</feature>
<feature type="glycosylation site" description="N-linked (GlcNAc...) asparagine" evidence="2">
    <location>
        <position position="370"/>
    </location>
</feature>
<organism>
    <name type="scientific">Penicillium oxalicum</name>
    <dbReference type="NCBI Taxonomy" id="69781"/>
    <lineage>
        <taxon>Eukaryota</taxon>
        <taxon>Fungi</taxon>
        <taxon>Dikarya</taxon>
        <taxon>Ascomycota</taxon>
        <taxon>Pezizomycotina</taxon>
        <taxon>Eurotiomycetes</taxon>
        <taxon>Eurotiomycetidae</taxon>
        <taxon>Eurotiales</taxon>
        <taxon>Aspergillaceae</taxon>
        <taxon>Penicillium</taxon>
    </lineage>
</organism>
<evidence type="ECO:0000255" key="1"/>
<evidence type="ECO:0000255" key="2">
    <source>
        <dbReference type="PROSITE-ProRule" id="PRU00498"/>
    </source>
</evidence>
<evidence type="ECO:0000256" key="3">
    <source>
        <dbReference type="SAM" id="MobiDB-lite"/>
    </source>
</evidence>
<evidence type="ECO:0000269" key="4">
    <source>
    </source>
</evidence>
<evidence type="ECO:0000303" key="5">
    <source>
    </source>
</evidence>
<evidence type="ECO:0000305" key="6"/>
<evidence type="ECO:0000305" key="7">
    <source>
    </source>
</evidence>